<evidence type="ECO:0000250" key="1"/>
<evidence type="ECO:0000305" key="2"/>
<gene>
    <name type="ORF">TVAG_054490</name>
</gene>
<accession>A2EYC4</accession>
<proteinExistence type="inferred from homology"/>
<dbReference type="EC" id="4.1.99.-"/>
<dbReference type="EMBL" id="DS113539">
    <property type="protein sequence ID" value="EAY02351.1"/>
    <property type="molecule type" value="Genomic_DNA"/>
</dbReference>
<dbReference type="RefSeq" id="XP_001330618.1">
    <property type="nucleotide sequence ID" value="XM_001330582.1"/>
</dbReference>
<dbReference type="SMR" id="A2EYC4"/>
<dbReference type="STRING" id="5722.A2EYC4"/>
<dbReference type="KEGG" id="tva:TVAG_2v0774250"/>
<dbReference type="VEuPathDB" id="TrichDB:TVAG_054490"/>
<dbReference type="VEuPathDB" id="TrichDB:TVAGG3_0774250"/>
<dbReference type="eggNOG" id="ENOG502QU0C">
    <property type="taxonomic scope" value="Eukaryota"/>
</dbReference>
<dbReference type="InParanoid" id="A2EYC4"/>
<dbReference type="OMA" id="MTMSAKK"/>
<dbReference type="OrthoDB" id="19261at2759"/>
<dbReference type="Proteomes" id="UP000001542">
    <property type="component" value="Unassembled WGS sequence"/>
</dbReference>
<dbReference type="GO" id="GO:0016830">
    <property type="term" value="F:carbon-carbon lyase activity"/>
    <property type="evidence" value="ECO:0007669"/>
    <property type="project" value="InterPro"/>
</dbReference>
<dbReference type="GO" id="GO:0016829">
    <property type="term" value="F:lyase activity"/>
    <property type="evidence" value="ECO:0000318"/>
    <property type="project" value="GO_Central"/>
</dbReference>
<dbReference type="GO" id="GO:0009072">
    <property type="term" value="P:aromatic amino acid metabolic process"/>
    <property type="evidence" value="ECO:0007669"/>
    <property type="project" value="InterPro"/>
</dbReference>
<dbReference type="CDD" id="cd00617">
    <property type="entry name" value="Tnase_like"/>
    <property type="match status" value="1"/>
</dbReference>
<dbReference type="Gene3D" id="3.90.1150.10">
    <property type="entry name" value="Aspartate Aminotransferase, domain 1"/>
    <property type="match status" value="1"/>
</dbReference>
<dbReference type="Gene3D" id="3.40.640.10">
    <property type="entry name" value="Type I PLP-dependent aspartate aminotransferase-like (Major domain)"/>
    <property type="match status" value="1"/>
</dbReference>
<dbReference type="InterPro" id="IPR001597">
    <property type="entry name" value="ArAA_b-elim_lyase/Thr_aldolase"/>
</dbReference>
<dbReference type="InterPro" id="IPR011166">
    <property type="entry name" value="Beta-eliminating_lyase"/>
</dbReference>
<dbReference type="InterPro" id="IPR015424">
    <property type="entry name" value="PyrdxlP-dep_Trfase"/>
</dbReference>
<dbReference type="InterPro" id="IPR015421">
    <property type="entry name" value="PyrdxlP-dep_Trfase_major"/>
</dbReference>
<dbReference type="InterPro" id="IPR015422">
    <property type="entry name" value="PyrdxlP-dep_Trfase_small"/>
</dbReference>
<dbReference type="InterPro" id="IPR018176">
    <property type="entry name" value="Tryptophanase_CS"/>
</dbReference>
<dbReference type="NCBIfam" id="NF009709">
    <property type="entry name" value="PRK13238.1"/>
    <property type="match status" value="1"/>
</dbReference>
<dbReference type="PANTHER" id="PTHR32325">
    <property type="entry name" value="BETA-ELIMINATING LYASE-LIKE PROTEIN-RELATED"/>
    <property type="match status" value="1"/>
</dbReference>
<dbReference type="PANTHER" id="PTHR32325:SF4">
    <property type="entry name" value="TRYPTOPHANASE"/>
    <property type="match status" value="1"/>
</dbReference>
<dbReference type="Pfam" id="PF01212">
    <property type="entry name" value="Beta_elim_lyase"/>
    <property type="match status" value="1"/>
</dbReference>
<dbReference type="PIRSF" id="PIRSF001386">
    <property type="entry name" value="Trpase"/>
    <property type="match status" value="1"/>
</dbReference>
<dbReference type="SUPFAM" id="SSF53383">
    <property type="entry name" value="PLP-dependent transferases"/>
    <property type="match status" value="1"/>
</dbReference>
<dbReference type="PROSITE" id="PS00853">
    <property type="entry name" value="BETA_ELIM_LYASE"/>
    <property type="match status" value="1"/>
</dbReference>
<keyword id="KW-0456">Lyase</keyword>
<keyword id="KW-0663">Pyridoxal phosphate</keyword>
<keyword id="KW-1185">Reference proteome</keyword>
<feature type="chain" id="PRO_0000330815" description="Probable beta-eliminating lyase">
    <location>
        <begin position="1"/>
        <end position="458"/>
    </location>
</feature>
<feature type="modified residue" description="N6-(pyridoxal phosphate)lysine" evidence="1">
    <location>
        <position position="257"/>
    </location>
</feature>
<sequence>MELPFAESWKIKMVEPIHKSTREQREQWLKEAHYNVFQLTADKVYIDLLTDSGTGAMSDRQWSALMMGDESYAGASSFLKLKETITKITGFDYILPTHQGRAAENVLFSYLVKQGDIVPGNSHFDTTKGHIESRHATALDCTVDIAKDTQAEYPFKGNVDIKKLEKALEENKDKIPFIIITITNNTAGGQPVSMANLREVRELADKYKKPVLFDSARFAENAYFIKVREEGYANKTIKEICLEMFKYADGMTMSAKKDGLVNIGGFIATRLKEWYEGAKSYCIMYEGYLTYGGMAGRDMSALAAGLEENTEFEMLETRIKQVEYLAKRLDEYGIPYQRPAGGHAIFLDARKILTHVPAEEFPAQTLTVELYLEAGIRGVEIGYILADRDPVTRENRFGGLDLLRLAIPRRVYTDNHMNVVAVALKNVFDRREKITRGVKITWEAEIMRHFTVQLERLQ</sequence>
<reference key="1">
    <citation type="journal article" date="2007" name="Science">
        <title>Draft genome sequence of the sexually transmitted pathogen Trichomonas vaginalis.</title>
        <authorList>
            <person name="Carlton J.M."/>
            <person name="Hirt R.P."/>
            <person name="Silva J.C."/>
            <person name="Delcher A.L."/>
            <person name="Schatz M."/>
            <person name="Zhao Q."/>
            <person name="Wortman J.R."/>
            <person name="Bidwell S.L."/>
            <person name="Alsmark U.C.M."/>
            <person name="Besteiro S."/>
            <person name="Sicheritz-Ponten T."/>
            <person name="Noel C.J."/>
            <person name="Dacks J.B."/>
            <person name="Foster P.G."/>
            <person name="Simillion C."/>
            <person name="Van de Peer Y."/>
            <person name="Miranda-Saavedra D."/>
            <person name="Barton G.J."/>
            <person name="Westrop G.D."/>
            <person name="Mueller S."/>
            <person name="Dessi D."/>
            <person name="Fiori P.L."/>
            <person name="Ren Q."/>
            <person name="Paulsen I."/>
            <person name="Zhang H."/>
            <person name="Bastida-Corcuera F.D."/>
            <person name="Simoes-Barbosa A."/>
            <person name="Brown M.T."/>
            <person name="Hayes R.D."/>
            <person name="Mukherjee M."/>
            <person name="Okumura C.Y."/>
            <person name="Schneider R."/>
            <person name="Smith A.J."/>
            <person name="Vanacova S."/>
            <person name="Villalvazo M."/>
            <person name="Haas B.J."/>
            <person name="Pertea M."/>
            <person name="Feldblyum T.V."/>
            <person name="Utterback T.R."/>
            <person name="Shu C.L."/>
            <person name="Osoegawa K."/>
            <person name="de Jong P.J."/>
            <person name="Hrdy I."/>
            <person name="Horvathova L."/>
            <person name="Zubacova Z."/>
            <person name="Dolezal P."/>
            <person name="Malik S.B."/>
            <person name="Logsdon J.M. Jr."/>
            <person name="Henze K."/>
            <person name="Gupta A."/>
            <person name="Wang C.C."/>
            <person name="Dunne R.L."/>
            <person name="Upcroft J.A."/>
            <person name="Upcroft P."/>
            <person name="White O."/>
            <person name="Salzberg S.L."/>
            <person name="Tang P."/>
            <person name="Chiu C.-H."/>
            <person name="Lee Y.-S."/>
            <person name="Embley T.M."/>
            <person name="Coombs G.H."/>
            <person name="Mottram J.C."/>
            <person name="Tachezy J."/>
            <person name="Fraser-Liggett C.M."/>
            <person name="Johnson P.J."/>
        </authorList>
    </citation>
    <scope>NUCLEOTIDE SEQUENCE [LARGE SCALE GENOMIC DNA]</scope>
    <source>
        <strain>ATCC PRA-98 / G3</strain>
    </source>
</reference>
<comment type="cofactor">
    <cofactor evidence="1">
        <name>pyridoxal 5'-phosphate</name>
        <dbReference type="ChEBI" id="CHEBI:597326"/>
    </cofactor>
</comment>
<comment type="similarity">
    <text evidence="2">Belongs to the beta-eliminating lyase family.</text>
</comment>
<name>BELY_TRIV3</name>
<organism>
    <name type="scientific">Trichomonas vaginalis (strain ATCC PRA-98 / G3)</name>
    <dbReference type="NCBI Taxonomy" id="412133"/>
    <lineage>
        <taxon>Eukaryota</taxon>
        <taxon>Metamonada</taxon>
        <taxon>Parabasalia</taxon>
        <taxon>Trichomonadida</taxon>
        <taxon>Trichomonadidae</taxon>
        <taxon>Trichomonas</taxon>
    </lineage>
</organism>
<protein>
    <recommendedName>
        <fullName>Probable beta-eliminating lyase</fullName>
        <ecNumber>4.1.99.-</ecNumber>
    </recommendedName>
</protein>